<keyword id="KW-0472">Membrane</keyword>
<keyword id="KW-0677">Repeat</keyword>
<protein>
    <recommendedName>
        <fullName>Electromotor neuron-associated protein 1</fullName>
    </recommendedName>
</protein>
<evidence type="ECO:0000256" key="1">
    <source>
        <dbReference type="SAM" id="MobiDB-lite"/>
    </source>
</evidence>
<evidence type="ECO:0000305" key="2"/>
<comment type="subcellular location">
    <subcellularLocation>
        <location>Endomembrane system</location>
        <topology>Peripheral membrane protein</topology>
    </subcellularLocation>
    <text>Associated with membranes of intracellular organelles.</text>
</comment>
<comment type="miscellaneous">
    <text>Has a highly basic region with many copies of the sequence K-K-E, repeated but not at fixed intervals.</text>
</comment>
<comment type="similarity">
    <text evidence="2">To T.californica electromotor neuron-associated protein 2.</text>
</comment>
<organism>
    <name type="scientific">Tetronarce californica</name>
    <name type="common">Pacific electric ray</name>
    <name type="synonym">Torpedo californica</name>
    <dbReference type="NCBI Taxonomy" id="7787"/>
    <lineage>
        <taxon>Eukaryota</taxon>
        <taxon>Metazoa</taxon>
        <taxon>Chordata</taxon>
        <taxon>Craniata</taxon>
        <taxon>Vertebrata</taxon>
        <taxon>Chondrichthyes</taxon>
        <taxon>Elasmobranchii</taxon>
        <taxon>Batoidea</taxon>
        <taxon>Torpediniformes</taxon>
        <taxon>Torpedinidae</taxon>
        <taxon>Tetronarce</taxon>
    </lineage>
</organism>
<proteinExistence type="evidence at transcript level"/>
<feature type="chain" id="PRO_0000086977" description="Electromotor neuron-associated protein 1">
    <location>
        <begin position="1" status="less than"/>
        <end position="721" status="greater than"/>
    </location>
</feature>
<feature type="repeat" description="1">
    <location>
        <begin position="563"/>
        <end position="565"/>
    </location>
</feature>
<feature type="repeat" description="2">
    <location>
        <begin position="654"/>
        <end position="656"/>
    </location>
</feature>
<feature type="repeat" description="3">
    <location>
        <begin position="666"/>
        <end position="668"/>
    </location>
</feature>
<feature type="repeat" description="4">
    <location>
        <begin position="673"/>
        <end position="675"/>
    </location>
</feature>
<feature type="repeat" description="5">
    <location>
        <begin position="681"/>
        <end position="683"/>
    </location>
</feature>
<feature type="repeat" description="6">
    <location>
        <begin position="689"/>
        <end position="691"/>
    </location>
</feature>
<feature type="repeat" description="7">
    <location>
        <begin position="694"/>
        <end position="696"/>
    </location>
</feature>
<feature type="repeat" description="8">
    <location>
        <begin position="700"/>
        <end position="702"/>
    </location>
</feature>
<feature type="repeat" description="9">
    <location>
        <begin position="705"/>
        <end position="707"/>
    </location>
</feature>
<feature type="repeat" description="10">
    <location>
        <begin position="709"/>
        <end position="711"/>
    </location>
</feature>
<feature type="repeat" description="11">
    <location>
        <begin position="713"/>
        <end position="715"/>
    </location>
</feature>
<feature type="region of interest" description="Disordered" evidence="1">
    <location>
        <begin position="537"/>
        <end position="721"/>
    </location>
</feature>
<feature type="region of interest" description="11 X 3 AA approximate repeats">
    <location>
        <begin position="563"/>
        <end position="715"/>
    </location>
</feature>
<feature type="compositionally biased region" description="Basic and acidic residues" evidence="1">
    <location>
        <begin position="562"/>
        <end position="572"/>
    </location>
</feature>
<feature type="compositionally biased region" description="Basic and acidic residues" evidence="1">
    <location>
        <begin position="584"/>
        <end position="714"/>
    </location>
</feature>
<feature type="non-terminal residue">
    <location>
        <position position="1"/>
    </location>
</feature>
<feature type="non-terminal residue">
    <location>
        <position position="721"/>
    </location>
</feature>
<dbReference type="EMBL" id="M30270">
    <property type="protein sequence ID" value="AAA49279.1"/>
    <property type="molecule type" value="mRNA"/>
</dbReference>
<dbReference type="PIR" id="A33319">
    <property type="entry name" value="A33319"/>
</dbReference>
<dbReference type="SMR" id="P14400"/>
<dbReference type="GO" id="GO:0005829">
    <property type="term" value="C:cytosol"/>
    <property type="evidence" value="ECO:0007669"/>
    <property type="project" value="TreeGrafter"/>
</dbReference>
<dbReference type="GO" id="GO:0030425">
    <property type="term" value="C:dendrite"/>
    <property type="evidence" value="ECO:0007669"/>
    <property type="project" value="TreeGrafter"/>
</dbReference>
<dbReference type="GO" id="GO:0012505">
    <property type="term" value="C:endomembrane system"/>
    <property type="evidence" value="ECO:0007669"/>
    <property type="project" value="UniProtKB-SubCell"/>
</dbReference>
<dbReference type="GO" id="GO:0016020">
    <property type="term" value="C:membrane"/>
    <property type="evidence" value="ECO:0007669"/>
    <property type="project" value="UniProtKB-KW"/>
</dbReference>
<dbReference type="GO" id="GO:0005874">
    <property type="term" value="C:microtubule"/>
    <property type="evidence" value="ECO:0007669"/>
    <property type="project" value="InterPro"/>
</dbReference>
<dbReference type="GO" id="GO:0005875">
    <property type="term" value="C:microtubule associated complex"/>
    <property type="evidence" value="ECO:0007669"/>
    <property type="project" value="TreeGrafter"/>
</dbReference>
<dbReference type="GO" id="GO:0043025">
    <property type="term" value="C:neuronal cell body"/>
    <property type="evidence" value="ECO:0007669"/>
    <property type="project" value="TreeGrafter"/>
</dbReference>
<dbReference type="GO" id="GO:0045202">
    <property type="term" value="C:synapse"/>
    <property type="evidence" value="ECO:0007669"/>
    <property type="project" value="TreeGrafter"/>
</dbReference>
<dbReference type="GO" id="GO:0003779">
    <property type="term" value="F:actin binding"/>
    <property type="evidence" value="ECO:0007669"/>
    <property type="project" value="TreeGrafter"/>
</dbReference>
<dbReference type="GO" id="GO:0008017">
    <property type="term" value="F:microtubule binding"/>
    <property type="evidence" value="ECO:0007669"/>
    <property type="project" value="InterPro"/>
</dbReference>
<dbReference type="GO" id="GO:0007409">
    <property type="term" value="P:axonogenesis"/>
    <property type="evidence" value="ECO:0007669"/>
    <property type="project" value="TreeGrafter"/>
</dbReference>
<dbReference type="GO" id="GO:0016358">
    <property type="term" value="P:dendrite development"/>
    <property type="evidence" value="ECO:0007669"/>
    <property type="project" value="TreeGrafter"/>
</dbReference>
<dbReference type="GO" id="GO:0000226">
    <property type="term" value="P:microtubule cytoskeleton organization"/>
    <property type="evidence" value="ECO:0007669"/>
    <property type="project" value="InterPro"/>
</dbReference>
<dbReference type="GO" id="GO:0031114">
    <property type="term" value="P:regulation of microtubule depolymerization"/>
    <property type="evidence" value="ECO:0007669"/>
    <property type="project" value="TreeGrafter"/>
</dbReference>
<dbReference type="InterPro" id="IPR026074">
    <property type="entry name" value="MAP1"/>
</dbReference>
<dbReference type="InterPro" id="IPR056617">
    <property type="entry name" value="MAP1B/S_N"/>
</dbReference>
<dbReference type="PANTHER" id="PTHR13843">
    <property type="entry name" value="MICROTUBULE-ASSOCIATED PROTEIN"/>
    <property type="match status" value="1"/>
</dbReference>
<dbReference type="PANTHER" id="PTHR13843:SF5">
    <property type="entry name" value="MICROTUBULE-ASSOCIATED PROTEIN 1B"/>
    <property type="match status" value="1"/>
</dbReference>
<dbReference type="Pfam" id="PF23415">
    <property type="entry name" value="MAPB1_N"/>
    <property type="match status" value="1"/>
</dbReference>
<dbReference type="Pfam" id="PF25281">
    <property type="entry name" value="MBL_MAP1B"/>
    <property type="match status" value="1"/>
</dbReference>
<sequence>NSVPTERLRMATLDVDPEASCSKLSTSPSNTSLTHRFLDNKFYLLVVIGEIVTEDHLRCAISDIERGIRSWDTDLISCNLDQELKLFVSRHSARFSADVRGQKILHHRSDVLETVVLINPSDEAVSTEVRLMITDAARHKLLVLTGQCCENTGELILQSGSFSFQNFIEIFTDQEIGELLSTTHPANKANLTLFCPEEGDWKNANLKKHNLQDFINIKLNSVSILPEMEGLSEFTEYLSESVEVPSSFDVLEPPASGGFLKLSKPCCYIFPGGRGDSALFAVNGFNMLINGGSDRRSCFWKLVRHLDRVDSILLTHNGADNLPGVNSLLQRKIAELEEEQSQGSTANSDWMKNLISPELGVVFLNVPENVTNLQPNFRVRRNTEETCLTLQYLNKLCVKPEPLFRTVGNVIDPVILFQKMGVGRLEMYILNSVKGSKELQFFMQHWSSNNKAKTGLILPNGKDAEISFPYLTSISSLIVWHPANPSEKIVRALFPGNAPQYNILDGLEKLKHLDFLKHPVVTQKELIASSAAPTVKQAKLKQWSDSKESLKSNSRPSVGKGVKKDVKEETPELTKPTAVSHQEAVNEKPQKVEKKEKPVVKKERPRTELQSKPEEKDAKAKADAAKQELEEKMQKDEKLKSESKPKPLKEKIVKKEVKAKKPEEKKKEEKDVKKESAKPDRKEEKAVIKKEKVKKEEKPKKEEVKKDVKKDVKKEVKKKGN</sequence>
<reference key="1">
    <citation type="journal article" date="1989" name="DNA">
        <title>Isolation and characterization of two homologous cDNA clones from Torpedo electromotor neurons.</title>
        <authorList>
            <person name="Ngsee J.K."/>
            <person name="Scheller R.H."/>
        </authorList>
    </citation>
    <scope>NUCLEOTIDE SEQUENCE [MRNA]</scope>
</reference>
<accession>P14400</accession>
<name>ENP1_TETCF</name>